<protein>
    <recommendedName>
        <fullName evidence="1">Small ribosomal subunit protein bS18</fullName>
    </recommendedName>
    <alternativeName>
        <fullName evidence="2">30S ribosomal protein S18</fullName>
    </alternativeName>
</protein>
<sequence length="75" mass="8992">MARFYRRRKFCRFTAENVAYIDYKDIDTLKQYITENGKIVPSRITGTKARYQRQLALAIKQARYLSLIPYTDNHK</sequence>
<dbReference type="EMBL" id="CU459141">
    <property type="protein sequence ID" value="CAM86296.1"/>
    <property type="molecule type" value="Genomic_DNA"/>
</dbReference>
<dbReference type="RefSeq" id="WP_000090661.1">
    <property type="nucleotide sequence ID" value="NZ_JBDGFB010000016.1"/>
</dbReference>
<dbReference type="SMR" id="B0V7G6"/>
<dbReference type="EnsemblBacteria" id="CAM86296">
    <property type="protein sequence ID" value="CAM86296"/>
    <property type="gene ID" value="ABAYE1383"/>
</dbReference>
<dbReference type="GeneID" id="92894414"/>
<dbReference type="KEGG" id="aby:ABAYE1383"/>
<dbReference type="HOGENOM" id="CLU_148710_2_3_6"/>
<dbReference type="GO" id="GO:0022627">
    <property type="term" value="C:cytosolic small ribosomal subunit"/>
    <property type="evidence" value="ECO:0007669"/>
    <property type="project" value="TreeGrafter"/>
</dbReference>
<dbReference type="GO" id="GO:0070181">
    <property type="term" value="F:small ribosomal subunit rRNA binding"/>
    <property type="evidence" value="ECO:0007669"/>
    <property type="project" value="TreeGrafter"/>
</dbReference>
<dbReference type="GO" id="GO:0003735">
    <property type="term" value="F:structural constituent of ribosome"/>
    <property type="evidence" value="ECO:0007669"/>
    <property type="project" value="InterPro"/>
</dbReference>
<dbReference type="GO" id="GO:0006412">
    <property type="term" value="P:translation"/>
    <property type="evidence" value="ECO:0007669"/>
    <property type="project" value="UniProtKB-UniRule"/>
</dbReference>
<dbReference type="FunFam" id="4.10.640.10:FF:000001">
    <property type="entry name" value="30S ribosomal protein S18"/>
    <property type="match status" value="1"/>
</dbReference>
<dbReference type="Gene3D" id="4.10.640.10">
    <property type="entry name" value="Ribosomal protein S18"/>
    <property type="match status" value="1"/>
</dbReference>
<dbReference type="HAMAP" id="MF_00270">
    <property type="entry name" value="Ribosomal_bS18"/>
    <property type="match status" value="1"/>
</dbReference>
<dbReference type="InterPro" id="IPR001648">
    <property type="entry name" value="Ribosomal_bS18"/>
</dbReference>
<dbReference type="InterPro" id="IPR018275">
    <property type="entry name" value="Ribosomal_bS18_CS"/>
</dbReference>
<dbReference type="InterPro" id="IPR036870">
    <property type="entry name" value="Ribosomal_bS18_sf"/>
</dbReference>
<dbReference type="NCBIfam" id="TIGR00165">
    <property type="entry name" value="S18"/>
    <property type="match status" value="1"/>
</dbReference>
<dbReference type="PANTHER" id="PTHR13479">
    <property type="entry name" value="30S RIBOSOMAL PROTEIN S18"/>
    <property type="match status" value="1"/>
</dbReference>
<dbReference type="PANTHER" id="PTHR13479:SF40">
    <property type="entry name" value="SMALL RIBOSOMAL SUBUNIT PROTEIN BS18M"/>
    <property type="match status" value="1"/>
</dbReference>
<dbReference type="Pfam" id="PF01084">
    <property type="entry name" value="Ribosomal_S18"/>
    <property type="match status" value="1"/>
</dbReference>
<dbReference type="PRINTS" id="PR00974">
    <property type="entry name" value="RIBOSOMALS18"/>
</dbReference>
<dbReference type="SUPFAM" id="SSF46911">
    <property type="entry name" value="Ribosomal protein S18"/>
    <property type="match status" value="1"/>
</dbReference>
<dbReference type="PROSITE" id="PS00057">
    <property type="entry name" value="RIBOSOMAL_S18"/>
    <property type="match status" value="1"/>
</dbReference>
<organism>
    <name type="scientific">Acinetobacter baumannii (strain AYE)</name>
    <dbReference type="NCBI Taxonomy" id="509173"/>
    <lineage>
        <taxon>Bacteria</taxon>
        <taxon>Pseudomonadati</taxon>
        <taxon>Pseudomonadota</taxon>
        <taxon>Gammaproteobacteria</taxon>
        <taxon>Moraxellales</taxon>
        <taxon>Moraxellaceae</taxon>
        <taxon>Acinetobacter</taxon>
        <taxon>Acinetobacter calcoaceticus/baumannii complex</taxon>
    </lineage>
</organism>
<accession>B0V7G6</accession>
<comment type="function">
    <text evidence="1">Binds as a heterodimer with protein bS6 to the central domain of the 16S rRNA, where it helps stabilize the platform of the 30S subunit.</text>
</comment>
<comment type="subunit">
    <text evidence="1">Part of the 30S ribosomal subunit. Forms a tight heterodimer with protein bS6.</text>
</comment>
<comment type="similarity">
    <text evidence="1">Belongs to the bacterial ribosomal protein bS18 family.</text>
</comment>
<proteinExistence type="inferred from homology"/>
<keyword id="KW-0687">Ribonucleoprotein</keyword>
<keyword id="KW-0689">Ribosomal protein</keyword>
<keyword id="KW-0694">RNA-binding</keyword>
<keyword id="KW-0699">rRNA-binding</keyword>
<evidence type="ECO:0000255" key="1">
    <source>
        <dbReference type="HAMAP-Rule" id="MF_00270"/>
    </source>
</evidence>
<evidence type="ECO:0000305" key="2"/>
<feature type="chain" id="PRO_1000114391" description="Small ribosomal subunit protein bS18">
    <location>
        <begin position="1"/>
        <end position="75"/>
    </location>
</feature>
<gene>
    <name evidence="1" type="primary">rpsR</name>
    <name type="ordered locus">ABAYE1383</name>
</gene>
<name>RS18_ACIBY</name>
<reference key="1">
    <citation type="journal article" date="2008" name="PLoS ONE">
        <title>Comparative analysis of Acinetobacters: three genomes for three lifestyles.</title>
        <authorList>
            <person name="Vallenet D."/>
            <person name="Nordmann P."/>
            <person name="Barbe V."/>
            <person name="Poirel L."/>
            <person name="Mangenot S."/>
            <person name="Bataille E."/>
            <person name="Dossat C."/>
            <person name="Gas S."/>
            <person name="Kreimeyer A."/>
            <person name="Lenoble P."/>
            <person name="Oztas S."/>
            <person name="Poulain J."/>
            <person name="Segurens B."/>
            <person name="Robert C."/>
            <person name="Abergel C."/>
            <person name="Claverie J.-M."/>
            <person name="Raoult D."/>
            <person name="Medigue C."/>
            <person name="Weissenbach J."/>
            <person name="Cruveiller S."/>
        </authorList>
    </citation>
    <scope>NUCLEOTIDE SEQUENCE [LARGE SCALE GENOMIC DNA]</scope>
    <source>
        <strain>AYE</strain>
    </source>
</reference>